<evidence type="ECO:0000255" key="1">
    <source>
        <dbReference type="HAMAP-Rule" id="MF_01807"/>
    </source>
</evidence>
<evidence type="ECO:0000255" key="2">
    <source>
        <dbReference type="PROSITE-ProRule" id="PRU01246"/>
    </source>
</evidence>
<evidence type="ECO:0000255" key="3">
    <source>
        <dbReference type="PROSITE-ProRule" id="PRU01248"/>
    </source>
</evidence>
<organism>
    <name type="scientific">Staphylococcus epidermidis (strain ATCC 35984 / DSM 28319 / BCRC 17069 / CCUG 31568 / BM 3577 / RP62A)</name>
    <dbReference type="NCBI Taxonomy" id="176279"/>
    <lineage>
        <taxon>Bacteria</taxon>
        <taxon>Bacillati</taxon>
        <taxon>Bacillota</taxon>
        <taxon>Bacilli</taxon>
        <taxon>Bacillales</taxon>
        <taxon>Staphylococcaceae</taxon>
        <taxon>Staphylococcus</taxon>
    </lineage>
</organism>
<keyword id="KW-0131">Cell cycle</keyword>
<keyword id="KW-0132">Cell division</keyword>
<keyword id="KW-0159">Chromosome partition</keyword>
<keyword id="KW-0963">Cytoplasm</keyword>
<keyword id="KW-0229">DNA integration</keyword>
<keyword id="KW-0233">DNA recombination</keyword>
<keyword id="KW-0238">DNA-binding</keyword>
<keyword id="KW-1185">Reference proteome</keyword>
<proteinExistence type="inferred from homology"/>
<sequence length="295" mass="34122">MNTIIEEYLNFIQIEKGLSNNTIGAYRRDLKKYKDYLEDNKISHIDFIDRQIIQECLGHLIDMGQSSKSLARFISTIRSFHQFALREKYAAKDPTVLIETPKYEKKLPDVLEIDEVIALLETPDLTKNNGYRDRTMLELLYATGMRVTEIIQLDVEDVNLMMGFVRVFGKGNKERIVPLGDTVIEYLTTYIETVRPQLLKQTTTQALFLNMHGKSLSRQGIWKIIKQYGLKANINKTLTPHTLRHSFATHLLENGADLRAVQEMLGHSDISTTQLYTHVSKSQIRKMYTQFHPRA</sequence>
<gene>
    <name evidence="1" type="primary">xerD</name>
    <name type="ordered locus">SERP1060</name>
</gene>
<protein>
    <recommendedName>
        <fullName evidence="1">Tyrosine recombinase XerD</fullName>
    </recommendedName>
</protein>
<dbReference type="EMBL" id="CP000029">
    <property type="protein sequence ID" value="AAW54410.1"/>
    <property type="molecule type" value="Genomic_DNA"/>
</dbReference>
<dbReference type="RefSeq" id="WP_001831286.1">
    <property type="nucleotide sequence ID" value="NC_002976.3"/>
</dbReference>
<dbReference type="SMR" id="Q5HP53"/>
<dbReference type="STRING" id="176279.SERP1060"/>
<dbReference type="GeneID" id="50018700"/>
<dbReference type="KEGG" id="ser:SERP1060"/>
<dbReference type="eggNOG" id="COG4974">
    <property type="taxonomic scope" value="Bacteria"/>
</dbReference>
<dbReference type="HOGENOM" id="CLU_027562_9_6_9"/>
<dbReference type="Proteomes" id="UP000000531">
    <property type="component" value="Chromosome"/>
</dbReference>
<dbReference type="GO" id="GO:0005737">
    <property type="term" value="C:cytoplasm"/>
    <property type="evidence" value="ECO:0007669"/>
    <property type="project" value="UniProtKB-SubCell"/>
</dbReference>
<dbReference type="GO" id="GO:0003677">
    <property type="term" value="F:DNA binding"/>
    <property type="evidence" value="ECO:0007669"/>
    <property type="project" value="UniProtKB-KW"/>
</dbReference>
<dbReference type="GO" id="GO:0009037">
    <property type="term" value="F:tyrosine-based site-specific recombinase activity"/>
    <property type="evidence" value="ECO:0007669"/>
    <property type="project" value="UniProtKB-UniRule"/>
</dbReference>
<dbReference type="GO" id="GO:0051301">
    <property type="term" value="P:cell division"/>
    <property type="evidence" value="ECO:0007669"/>
    <property type="project" value="UniProtKB-KW"/>
</dbReference>
<dbReference type="GO" id="GO:0007059">
    <property type="term" value="P:chromosome segregation"/>
    <property type="evidence" value="ECO:0007669"/>
    <property type="project" value="UniProtKB-UniRule"/>
</dbReference>
<dbReference type="GO" id="GO:0006313">
    <property type="term" value="P:DNA transposition"/>
    <property type="evidence" value="ECO:0007669"/>
    <property type="project" value="UniProtKB-UniRule"/>
</dbReference>
<dbReference type="CDD" id="cd00798">
    <property type="entry name" value="INT_XerDC_C"/>
    <property type="match status" value="1"/>
</dbReference>
<dbReference type="Gene3D" id="1.10.150.130">
    <property type="match status" value="1"/>
</dbReference>
<dbReference type="Gene3D" id="1.10.443.10">
    <property type="entry name" value="Intergrase catalytic core"/>
    <property type="match status" value="1"/>
</dbReference>
<dbReference type="HAMAP" id="MF_01808">
    <property type="entry name" value="Recomb_XerC_XerD"/>
    <property type="match status" value="1"/>
</dbReference>
<dbReference type="HAMAP" id="MF_01807">
    <property type="entry name" value="Recomb_XerD"/>
    <property type="match status" value="1"/>
</dbReference>
<dbReference type="InterPro" id="IPR044068">
    <property type="entry name" value="CB"/>
</dbReference>
<dbReference type="InterPro" id="IPR011010">
    <property type="entry name" value="DNA_brk_join_enz"/>
</dbReference>
<dbReference type="InterPro" id="IPR013762">
    <property type="entry name" value="Integrase-like_cat_sf"/>
</dbReference>
<dbReference type="InterPro" id="IPR002104">
    <property type="entry name" value="Integrase_catalytic"/>
</dbReference>
<dbReference type="InterPro" id="IPR010998">
    <property type="entry name" value="Integrase_recombinase_N"/>
</dbReference>
<dbReference type="InterPro" id="IPR004107">
    <property type="entry name" value="Integrase_SAM-like_N"/>
</dbReference>
<dbReference type="InterPro" id="IPR011932">
    <property type="entry name" value="Recomb_XerD"/>
</dbReference>
<dbReference type="InterPro" id="IPR023009">
    <property type="entry name" value="Tyrosine_recombinase_XerC/XerD"/>
</dbReference>
<dbReference type="InterPro" id="IPR050090">
    <property type="entry name" value="Tyrosine_recombinase_XerCD"/>
</dbReference>
<dbReference type="NCBIfam" id="NF001399">
    <property type="entry name" value="PRK00283.1"/>
    <property type="match status" value="1"/>
</dbReference>
<dbReference type="NCBIfam" id="NF040815">
    <property type="entry name" value="recomb_XerA_Arch"/>
    <property type="match status" value="1"/>
</dbReference>
<dbReference type="NCBIfam" id="TIGR02225">
    <property type="entry name" value="recomb_XerD"/>
    <property type="match status" value="1"/>
</dbReference>
<dbReference type="PANTHER" id="PTHR30349">
    <property type="entry name" value="PHAGE INTEGRASE-RELATED"/>
    <property type="match status" value="1"/>
</dbReference>
<dbReference type="PANTHER" id="PTHR30349:SF81">
    <property type="entry name" value="TYROSINE RECOMBINASE XERC"/>
    <property type="match status" value="1"/>
</dbReference>
<dbReference type="Pfam" id="PF02899">
    <property type="entry name" value="Phage_int_SAM_1"/>
    <property type="match status" value="1"/>
</dbReference>
<dbReference type="Pfam" id="PF00589">
    <property type="entry name" value="Phage_integrase"/>
    <property type="match status" value="1"/>
</dbReference>
<dbReference type="SUPFAM" id="SSF56349">
    <property type="entry name" value="DNA breaking-rejoining enzymes"/>
    <property type="match status" value="1"/>
</dbReference>
<dbReference type="PROSITE" id="PS51900">
    <property type="entry name" value="CB"/>
    <property type="match status" value="1"/>
</dbReference>
<dbReference type="PROSITE" id="PS51898">
    <property type="entry name" value="TYR_RECOMBINASE"/>
    <property type="match status" value="1"/>
</dbReference>
<name>XERD_STAEQ</name>
<comment type="function">
    <text evidence="1">Site-specific tyrosine recombinase, which acts by catalyzing the cutting and rejoining of the recombining DNA molecules. The XerC-XerD complex is essential to convert dimers of the bacterial chromosome into monomers to permit their segregation at cell division. It also contributes to the segregational stability of plasmids.</text>
</comment>
<comment type="subunit">
    <text evidence="1">Forms a cyclic heterotetrameric complex composed of two molecules of XerC and two molecules of XerD.</text>
</comment>
<comment type="subcellular location">
    <subcellularLocation>
        <location evidence="1">Cytoplasm</location>
    </subcellularLocation>
</comment>
<comment type="similarity">
    <text evidence="1">Belongs to the 'phage' integrase family. XerD subfamily.</text>
</comment>
<feature type="chain" id="PRO_0000095424" description="Tyrosine recombinase XerD">
    <location>
        <begin position="1"/>
        <end position="295"/>
    </location>
</feature>
<feature type="domain" description="Core-binding (CB)" evidence="3">
    <location>
        <begin position="1"/>
        <end position="85"/>
    </location>
</feature>
<feature type="domain" description="Tyr recombinase" evidence="2">
    <location>
        <begin position="106"/>
        <end position="289"/>
    </location>
</feature>
<feature type="active site" evidence="1">
    <location>
        <position position="146"/>
    </location>
</feature>
<feature type="active site" evidence="1">
    <location>
        <position position="170"/>
    </location>
</feature>
<feature type="active site" evidence="1">
    <location>
        <position position="241"/>
    </location>
</feature>
<feature type="active site" evidence="1">
    <location>
        <position position="244"/>
    </location>
</feature>
<feature type="active site" evidence="1">
    <location>
        <position position="267"/>
    </location>
</feature>
<feature type="active site" description="O-(3'-phospho-DNA)-tyrosine intermediate" evidence="1">
    <location>
        <position position="276"/>
    </location>
</feature>
<reference key="1">
    <citation type="journal article" date="2005" name="J. Bacteriol.">
        <title>Insights on evolution of virulence and resistance from the complete genome analysis of an early methicillin-resistant Staphylococcus aureus strain and a biofilm-producing methicillin-resistant Staphylococcus epidermidis strain.</title>
        <authorList>
            <person name="Gill S.R."/>
            <person name="Fouts D.E."/>
            <person name="Archer G.L."/>
            <person name="Mongodin E.F."/>
            <person name="DeBoy R.T."/>
            <person name="Ravel J."/>
            <person name="Paulsen I.T."/>
            <person name="Kolonay J.F."/>
            <person name="Brinkac L.M."/>
            <person name="Beanan M.J."/>
            <person name="Dodson R.J."/>
            <person name="Daugherty S.C."/>
            <person name="Madupu R."/>
            <person name="Angiuoli S.V."/>
            <person name="Durkin A.S."/>
            <person name="Haft D.H."/>
            <person name="Vamathevan J.J."/>
            <person name="Khouri H."/>
            <person name="Utterback T.R."/>
            <person name="Lee C."/>
            <person name="Dimitrov G."/>
            <person name="Jiang L."/>
            <person name="Qin H."/>
            <person name="Weidman J."/>
            <person name="Tran K."/>
            <person name="Kang K.H."/>
            <person name="Hance I.R."/>
            <person name="Nelson K.E."/>
            <person name="Fraser C.M."/>
        </authorList>
    </citation>
    <scope>NUCLEOTIDE SEQUENCE [LARGE SCALE GENOMIC DNA]</scope>
    <source>
        <strain>ATCC 35984 / DSM 28319 / BCRC 17069 / CCUG 31568 / BM 3577 / RP62A</strain>
    </source>
</reference>
<accession>Q5HP53</accession>